<protein>
    <recommendedName>
        <fullName evidence="1">Anthranilate phosphoribosyltransferase</fullName>
        <ecNumber evidence="1">2.4.2.18</ecNumber>
    </recommendedName>
</protein>
<name>TRPD_DESRM</name>
<keyword id="KW-0028">Amino-acid biosynthesis</keyword>
<keyword id="KW-0057">Aromatic amino acid biosynthesis</keyword>
<keyword id="KW-0328">Glycosyltransferase</keyword>
<keyword id="KW-0460">Magnesium</keyword>
<keyword id="KW-0479">Metal-binding</keyword>
<keyword id="KW-1185">Reference proteome</keyword>
<keyword id="KW-0808">Transferase</keyword>
<keyword id="KW-0822">Tryptophan biosynthesis</keyword>
<dbReference type="EC" id="2.4.2.18" evidence="1"/>
<dbReference type="EMBL" id="CP000612">
    <property type="protein sequence ID" value="ABO48799.1"/>
    <property type="molecule type" value="Genomic_DNA"/>
</dbReference>
<dbReference type="RefSeq" id="WP_011876637.1">
    <property type="nucleotide sequence ID" value="NC_009253.1"/>
</dbReference>
<dbReference type="SMR" id="A4J146"/>
<dbReference type="STRING" id="349161.Dred_0250"/>
<dbReference type="KEGG" id="drm:Dred_0250"/>
<dbReference type="eggNOG" id="COG0547">
    <property type="taxonomic scope" value="Bacteria"/>
</dbReference>
<dbReference type="HOGENOM" id="CLU_034315_2_1_9"/>
<dbReference type="OrthoDB" id="9806430at2"/>
<dbReference type="UniPathway" id="UPA00035">
    <property type="reaction ID" value="UER00041"/>
</dbReference>
<dbReference type="Proteomes" id="UP000001556">
    <property type="component" value="Chromosome"/>
</dbReference>
<dbReference type="GO" id="GO:0005829">
    <property type="term" value="C:cytosol"/>
    <property type="evidence" value="ECO:0007669"/>
    <property type="project" value="TreeGrafter"/>
</dbReference>
<dbReference type="GO" id="GO:0004048">
    <property type="term" value="F:anthranilate phosphoribosyltransferase activity"/>
    <property type="evidence" value="ECO:0007669"/>
    <property type="project" value="UniProtKB-UniRule"/>
</dbReference>
<dbReference type="GO" id="GO:0000287">
    <property type="term" value="F:magnesium ion binding"/>
    <property type="evidence" value="ECO:0007669"/>
    <property type="project" value="UniProtKB-UniRule"/>
</dbReference>
<dbReference type="GO" id="GO:0000162">
    <property type="term" value="P:L-tryptophan biosynthetic process"/>
    <property type="evidence" value="ECO:0007669"/>
    <property type="project" value="UniProtKB-UniRule"/>
</dbReference>
<dbReference type="FunFam" id="3.40.1030.10:FF:000002">
    <property type="entry name" value="Anthranilate phosphoribosyltransferase"/>
    <property type="match status" value="1"/>
</dbReference>
<dbReference type="Gene3D" id="3.40.1030.10">
    <property type="entry name" value="Nucleoside phosphorylase/phosphoribosyltransferase catalytic domain"/>
    <property type="match status" value="1"/>
</dbReference>
<dbReference type="Gene3D" id="1.20.970.10">
    <property type="entry name" value="Transferase, Pyrimidine Nucleoside Phosphorylase, Chain C"/>
    <property type="match status" value="1"/>
</dbReference>
<dbReference type="HAMAP" id="MF_00211">
    <property type="entry name" value="TrpD"/>
    <property type="match status" value="1"/>
</dbReference>
<dbReference type="InterPro" id="IPR005940">
    <property type="entry name" value="Anthranilate_Pribosyl_Tfrase"/>
</dbReference>
<dbReference type="InterPro" id="IPR000312">
    <property type="entry name" value="Glycosyl_Trfase_fam3"/>
</dbReference>
<dbReference type="InterPro" id="IPR017459">
    <property type="entry name" value="Glycosyl_Trfase_fam3_N_dom"/>
</dbReference>
<dbReference type="InterPro" id="IPR036320">
    <property type="entry name" value="Glycosyl_Trfase_fam3_N_dom_sf"/>
</dbReference>
<dbReference type="InterPro" id="IPR035902">
    <property type="entry name" value="Nuc_phospho_transferase"/>
</dbReference>
<dbReference type="NCBIfam" id="TIGR01245">
    <property type="entry name" value="trpD"/>
    <property type="match status" value="1"/>
</dbReference>
<dbReference type="PANTHER" id="PTHR43285">
    <property type="entry name" value="ANTHRANILATE PHOSPHORIBOSYLTRANSFERASE"/>
    <property type="match status" value="1"/>
</dbReference>
<dbReference type="PANTHER" id="PTHR43285:SF2">
    <property type="entry name" value="ANTHRANILATE PHOSPHORIBOSYLTRANSFERASE"/>
    <property type="match status" value="1"/>
</dbReference>
<dbReference type="Pfam" id="PF02885">
    <property type="entry name" value="Glycos_trans_3N"/>
    <property type="match status" value="1"/>
</dbReference>
<dbReference type="Pfam" id="PF00591">
    <property type="entry name" value="Glycos_transf_3"/>
    <property type="match status" value="1"/>
</dbReference>
<dbReference type="SUPFAM" id="SSF52418">
    <property type="entry name" value="Nucleoside phosphorylase/phosphoribosyltransferase catalytic domain"/>
    <property type="match status" value="1"/>
</dbReference>
<dbReference type="SUPFAM" id="SSF47648">
    <property type="entry name" value="Nucleoside phosphorylase/phosphoribosyltransferase N-terminal domain"/>
    <property type="match status" value="1"/>
</dbReference>
<accession>A4J146</accession>
<reference key="1">
    <citation type="submission" date="2007-03" db="EMBL/GenBank/DDBJ databases">
        <title>Complete sequence of Desulfotomaculum reducens MI-1.</title>
        <authorList>
            <consortium name="US DOE Joint Genome Institute"/>
            <person name="Copeland A."/>
            <person name="Lucas S."/>
            <person name="Lapidus A."/>
            <person name="Barry K."/>
            <person name="Detter J.C."/>
            <person name="Glavina del Rio T."/>
            <person name="Hammon N."/>
            <person name="Israni S."/>
            <person name="Dalin E."/>
            <person name="Tice H."/>
            <person name="Pitluck S."/>
            <person name="Sims D."/>
            <person name="Brettin T."/>
            <person name="Bruce D."/>
            <person name="Han C."/>
            <person name="Tapia R."/>
            <person name="Schmutz J."/>
            <person name="Larimer F."/>
            <person name="Land M."/>
            <person name="Hauser L."/>
            <person name="Kyrpides N."/>
            <person name="Kim E."/>
            <person name="Tebo B.M."/>
            <person name="Richardson P."/>
        </authorList>
    </citation>
    <scope>NUCLEOTIDE SEQUENCE [LARGE SCALE GENOMIC DNA]</scope>
    <source>
        <strain>ATCC BAA-1160 / DSM 100696 / MI-1</strain>
    </source>
</reference>
<organism>
    <name type="scientific">Desulforamulus reducens (strain ATCC BAA-1160 / DSM 100696 / MI-1)</name>
    <name type="common">Desulfotomaculum reducens</name>
    <dbReference type="NCBI Taxonomy" id="349161"/>
    <lineage>
        <taxon>Bacteria</taxon>
        <taxon>Bacillati</taxon>
        <taxon>Bacillota</taxon>
        <taxon>Clostridia</taxon>
        <taxon>Eubacteriales</taxon>
        <taxon>Peptococcaceae</taxon>
        <taxon>Desulforamulus</taxon>
    </lineage>
</organism>
<gene>
    <name evidence="1" type="primary">trpD</name>
    <name type="ordered locus">Dred_0250</name>
</gene>
<sequence length="345" mass="36422">MITEAIQKVVAGINLSEAEAMETMQEVMEGKATQAQIASLLTALHLKGETVPEITGFARTMRTKVIRVQTKRRNLVDTCGTGGDGANTFNISTACAFVLAGAGLPVAKHGNRSVSSKCGSADVLEQLGVFVQLTPEEAGLCLDQVGIAFLFAPLLHGAMKYAAAPRKEIGIRTVFNILGPLTNPAFAENQVLGVYSSDLAPVLAQVLANLGTKRSFVIHGCGGLDEISLAGEALVYEVKDNQVKEMIIDPMDYGLDRAPISALAGGDAKRNARMIKNILSGAPGPQRDTIIINAALGLIAGGLVRDLAMGIRLAEQIIDEGYALKKLNLLVEFSQTLVGRRSAAL</sequence>
<feature type="chain" id="PRO_0000325422" description="Anthranilate phosphoribosyltransferase">
    <location>
        <begin position="1"/>
        <end position="345"/>
    </location>
</feature>
<feature type="binding site" evidence="1">
    <location>
        <position position="80"/>
    </location>
    <ligand>
        <name>5-phospho-alpha-D-ribose 1-diphosphate</name>
        <dbReference type="ChEBI" id="CHEBI:58017"/>
    </ligand>
</feature>
<feature type="binding site" evidence="1">
    <location>
        <position position="80"/>
    </location>
    <ligand>
        <name>anthranilate</name>
        <dbReference type="ChEBI" id="CHEBI:16567"/>
        <label>1</label>
    </ligand>
</feature>
<feature type="binding site" evidence="1">
    <location>
        <begin position="83"/>
        <end position="84"/>
    </location>
    <ligand>
        <name>5-phospho-alpha-D-ribose 1-diphosphate</name>
        <dbReference type="ChEBI" id="CHEBI:58017"/>
    </ligand>
</feature>
<feature type="binding site" evidence="1">
    <location>
        <position position="88"/>
    </location>
    <ligand>
        <name>5-phospho-alpha-D-ribose 1-diphosphate</name>
        <dbReference type="ChEBI" id="CHEBI:58017"/>
    </ligand>
</feature>
<feature type="binding site" evidence="1">
    <location>
        <begin position="90"/>
        <end position="93"/>
    </location>
    <ligand>
        <name>5-phospho-alpha-D-ribose 1-diphosphate</name>
        <dbReference type="ChEBI" id="CHEBI:58017"/>
    </ligand>
</feature>
<feature type="binding site" evidence="1">
    <location>
        <position position="92"/>
    </location>
    <ligand>
        <name>Mg(2+)</name>
        <dbReference type="ChEBI" id="CHEBI:18420"/>
        <label>1</label>
    </ligand>
</feature>
<feature type="binding site" evidence="1">
    <location>
        <begin position="108"/>
        <end position="116"/>
    </location>
    <ligand>
        <name>5-phospho-alpha-D-ribose 1-diphosphate</name>
        <dbReference type="ChEBI" id="CHEBI:58017"/>
    </ligand>
</feature>
<feature type="binding site" evidence="1">
    <location>
        <position position="111"/>
    </location>
    <ligand>
        <name>anthranilate</name>
        <dbReference type="ChEBI" id="CHEBI:16567"/>
        <label>1</label>
    </ligand>
</feature>
<feature type="binding site" evidence="1">
    <location>
        <position position="120"/>
    </location>
    <ligand>
        <name>5-phospho-alpha-D-ribose 1-diphosphate</name>
        <dbReference type="ChEBI" id="CHEBI:58017"/>
    </ligand>
</feature>
<feature type="binding site" evidence="1">
    <location>
        <position position="166"/>
    </location>
    <ligand>
        <name>anthranilate</name>
        <dbReference type="ChEBI" id="CHEBI:16567"/>
        <label>2</label>
    </ligand>
</feature>
<feature type="binding site" evidence="1">
    <location>
        <position position="225"/>
    </location>
    <ligand>
        <name>Mg(2+)</name>
        <dbReference type="ChEBI" id="CHEBI:18420"/>
        <label>2</label>
    </ligand>
</feature>
<feature type="binding site" evidence="1">
    <location>
        <position position="226"/>
    </location>
    <ligand>
        <name>Mg(2+)</name>
        <dbReference type="ChEBI" id="CHEBI:18420"/>
        <label>1</label>
    </ligand>
</feature>
<feature type="binding site" evidence="1">
    <location>
        <position position="226"/>
    </location>
    <ligand>
        <name>Mg(2+)</name>
        <dbReference type="ChEBI" id="CHEBI:18420"/>
        <label>2</label>
    </ligand>
</feature>
<evidence type="ECO:0000255" key="1">
    <source>
        <dbReference type="HAMAP-Rule" id="MF_00211"/>
    </source>
</evidence>
<proteinExistence type="inferred from homology"/>
<comment type="function">
    <text evidence="1">Catalyzes the transfer of the phosphoribosyl group of 5-phosphorylribose-1-pyrophosphate (PRPP) to anthranilate to yield N-(5'-phosphoribosyl)-anthranilate (PRA).</text>
</comment>
<comment type="catalytic activity">
    <reaction evidence="1">
        <text>N-(5-phospho-beta-D-ribosyl)anthranilate + diphosphate = 5-phospho-alpha-D-ribose 1-diphosphate + anthranilate</text>
        <dbReference type="Rhea" id="RHEA:11768"/>
        <dbReference type="ChEBI" id="CHEBI:16567"/>
        <dbReference type="ChEBI" id="CHEBI:18277"/>
        <dbReference type="ChEBI" id="CHEBI:33019"/>
        <dbReference type="ChEBI" id="CHEBI:58017"/>
        <dbReference type="EC" id="2.4.2.18"/>
    </reaction>
</comment>
<comment type="cofactor">
    <cofactor evidence="1">
        <name>Mg(2+)</name>
        <dbReference type="ChEBI" id="CHEBI:18420"/>
    </cofactor>
    <text evidence="1">Binds 2 magnesium ions per monomer.</text>
</comment>
<comment type="pathway">
    <text evidence="1">Amino-acid biosynthesis; L-tryptophan biosynthesis; L-tryptophan from chorismate: step 2/5.</text>
</comment>
<comment type="subunit">
    <text evidence="1">Homodimer.</text>
</comment>
<comment type="similarity">
    <text evidence="1">Belongs to the anthranilate phosphoribosyltransferase family.</text>
</comment>